<sequence>MSITAKSVYRDAGNFFRNQFITILLVSLLCAFITVVLGHAFSPSDAQIAQLSEGEHLAGSAGLFELVQNMTPEQQQILLRASAASTFSGLIGNAILAGGIILMIQLVSAGHRVSALRAIGASAPALPKLFILIFLTTLLVQIGIMLIVVPGIIMAIVLALAPVMLVEEKMGVFAAMRSSMRLAWANMRLVAPAVIGWLLAKTLLLLFAPSFAVLTPNVGAVLANTLSNLISAVLLIYLFRLYMLIRQ</sequence>
<reference key="1">
    <citation type="journal article" date="2001" name="Nature">
        <title>Complete genome sequence of Salmonella enterica serovar Typhimurium LT2.</title>
        <authorList>
            <person name="McClelland M."/>
            <person name="Sanderson K.E."/>
            <person name="Spieth J."/>
            <person name="Clifton S.W."/>
            <person name="Latreille P."/>
            <person name="Courtney L."/>
            <person name="Porwollik S."/>
            <person name="Ali J."/>
            <person name="Dante M."/>
            <person name="Du F."/>
            <person name="Hou S."/>
            <person name="Layman D."/>
            <person name="Leonard S."/>
            <person name="Nguyen C."/>
            <person name="Scott K."/>
            <person name="Holmes A."/>
            <person name="Grewal N."/>
            <person name="Mulvaney E."/>
            <person name="Ryan E."/>
            <person name="Sun H."/>
            <person name="Florea L."/>
            <person name="Miller W."/>
            <person name="Stoneking T."/>
            <person name="Nhan M."/>
            <person name="Waterston R."/>
            <person name="Wilson R.K."/>
        </authorList>
    </citation>
    <scope>NUCLEOTIDE SEQUENCE [LARGE SCALE GENOMIC DNA]</scope>
    <source>
        <strain>LT2 / SGSC1412 / ATCC 700720</strain>
    </source>
</reference>
<evidence type="ECO:0000250" key="1"/>
<evidence type="ECO:0000255" key="2"/>
<evidence type="ECO:0000305" key="3"/>
<accession>Q8ZP49</accession>
<gene>
    <name type="primary">yciC</name>
    <name type="ordered locus">STM1734</name>
</gene>
<feature type="chain" id="PRO_0000206519" description="UPF0259 membrane protein YciC">
    <location>
        <begin position="1"/>
        <end position="247"/>
    </location>
</feature>
<feature type="topological domain" description="Cytoplasmic" evidence="2">
    <location>
        <begin position="1"/>
        <end position="19"/>
    </location>
</feature>
<feature type="transmembrane region" description="Helical" evidence="2">
    <location>
        <begin position="20"/>
        <end position="40"/>
    </location>
</feature>
<feature type="topological domain" description="Periplasmic" evidence="2">
    <location>
        <begin position="41"/>
        <end position="86"/>
    </location>
</feature>
<feature type="transmembrane region" description="Helical" evidence="2">
    <location>
        <begin position="87"/>
        <end position="107"/>
    </location>
</feature>
<feature type="topological domain" description="Cytoplasmic" evidence="2">
    <location>
        <begin position="108"/>
        <end position="117"/>
    </location>
</feature>
<feature type="transmembrane region" description="Helical" evidence="2">
    <location>
        <begin position="118"/>
        <end position="140"/>
    </location>
</feature>
<feature type="topological domain" description="Periplasmic" evidence="2">
    <location>
        <begin position="141"/>
        <end position="151"/>
    </location>
</feature>
<feature type="transmembrane region" description="Helical" evidence="2">
    <location>
        <begin position="152"/>
        <end position="172"/>
    </location>
</feature>
<feature type="topological domain" description="Cytoplasmic" evidence="2">
    <location>
        <begin position="173"/>
        <end position="193"/>
    </location>
</feature>
<feature type="transmembrane region" description="Helical" evidence="2">
    <location>
        <begin position="194"/>
        <end position="214"/>
    </location>
</feature>
<feature type="topological domain" description="Periplasmic" evidence="2">
    <location>
        <begin position="215"/>
        <end position="218"/>
    </location>
</feature>
<feature type="transmembrane region" description="Helical" evidence="2">
    <location>
        <begin position="219"/>
        <end position="239"/>
    </location>
</feature>
<feature type="topological domain" description="Cytoplasmic" evidence="2">
    <location>
        <begin position="240"/>
        <end position="247"/>
    </location>
</feature>
<name>YCIC_SALTY</name>
<dbReference type="EMBL" id="AE006468">
    <property type="protein sequence ID" value="AAL20652.1"/>
    <property type="molecule type" value="Genomic_DNA"/>
</dbReference>
<dbReference type="RefSeq" id="NP_460693.1">
    <property type="nucleotide sequence ID" value="NC_003197.2"/>
</dbReference>
<dbReference type="RefSeq" id="WP_000028507.1">
    <property type="nucleotide sequence ID" value="NC_003197.2"/>
</dbReference>
<dbReference type="STRING" id="99287.STM1734"/>
<dbReference type="PaxDb" id="99287-STM1734"/>
<dbReference type="GeneID" id="1253253"/>
<dbReference type="KEGG" id="stm:STM1734"/>
<dbReference type="PATRIC" id="fig|99287.12.peg.1830"/>
<dbReference type="HOGENOM" id="CLU_073287_0_0_6"/>
<dbReference type="OMA" id="PGLWLMV"/>
<dbReference type="PhylomeDB" id="Q8ZP49"/>
<dbReference type="BioCyc" id="SENT99287:STM1734-MONOMER"/>
<dbReference type="Proteomes" id="UP000001014">
    <property type="component" value="Chromosome"/>
</dbReference>
<dbReference type="GO" id="GO:0005886">
    <property type="term" value="C:plasma membrane"/>
    <property type="evidence" value="ECO:0007669"/>
    <property type="project" value="UniProtKB-SubCell"/>
</dbReference>
<dbReference type="HAMAP" id="MF_01067">
    <property type="entry name" value="UPF0259"/>
    <property type="match status" value="1"/>
</dbReference>
<dbReference type="InterPro" id="IPR009627">
    <property type="entry name" value="UPF0259"/>
</dbReference>
<dbReference type="NCBIfam" id="NF002774">
    <property type="entry name" value="PRK02868.1"/>
    <property type="match status" value="1"/>
</dbReference>
<dbReference type="Pfam" id="PF06790">
    <property type="entry name" value="UPF0259"/>
    <property type="match status" value="1"/>
</dbReference>
<keyword id="KW-0997">Cell inner membrane</keyword>
<keyword id="KW-1003">Cell membrane</keyword>
<keyword id="KW-0472">Membrane</keyword>
<keyword id="KW-1185">Reference proteome</keyword>
<keyword id="KW-0812">Transmembrane</keyword>
<keyword id="KW-1133">Transmembrane helix</keyword>
<organism>
    <name type="scientific">Salmonella typhimurium (strain LT2 / SGSC1412 / ATCC 700720)</name>
    <dbReference type="NCBI Taxonomy" id="99287"/>
    <lineage>
        <taxon>Bacteria</taxon>
        <taxon>Pseudomonadati</taxon>
        <taxon>Pseudomonadota</taxon>
        <taxon>Gammaproteobacteria</taxon>
        <taxon>Enterobacterales</taxon>
        <taxon>Enterobacteriaceae</taxon>
        <taxon>Salmonella</taxon>
    </lineage>
</organism>
<comment type="subcellular location">
    <subcellularLocation>
        <location evidence="1">Cell inner membrane</location>
        <topology evidence="1">Multi-pass membrane protein</topology>
    </subcellularLocation>
</comment>
<comment type="similarity">
    <text evidence="3">Belongs to the UPF0259 family.</text>
</comment>
<protein>
    <recommendedName>
        <fullName>UPF0259 membrane protein YciC</fullName>
    </recommendedName>
</protein>
<proteinExistence type="inferred from homology"/>